<keyword id="KW-0010">Activator</keyword>
<keyword id="KW-0963">Cytoplasm</keyword>
<keyword id="KW-0678">Repressor</keyword>
<keyword id="KW-0694">RNA-binding</keyword>
<keyword id="KW-0810">Translation regulation</keyword>
<evidence type="ECO:0000255" key="1">
    <source>
        <dbReference type="HAMAP-Rule" id="MF_00167"/>
    </source>
</evidence>
<evidence type="ECO:0000256" key="2">
    <source>
        <dbReference type="SAM" id="MobiDB-lite"/>
    </source>
</evidence>
<accession>B2SUD1</accession>
<sequence length="70" mass="7566">MLILTRRVGETLMIGDSVTVTVLGVKGNQVRIGITAPKDVAVHREEIYQRIQRGDEPVASGAHHGDDSSN</sequence>
<name>CSRA_XANOP</name>
<dbReference type="EMBL" id="CP000967">
    <property type="protein sequence ID" value="ACD58321.1"/>
    <property type="molecule type" value="Genomic_DNA"/>
</dbReference>
<dbReference type="RefSeq" id="WP_003481884.1">
    <property type="nucleotide sequence ID" value="NC_010717.2"/>
</dbReference>
<dbReference type="SMR" id="B2SUD1"/>
<dbReference type="GeneID" id="97510119"/>
<dbReference type="KEGG" id="xop:PXO_00146"/>
<dbReference type="eggNOG" id="COG1551">
    <property type="taxonomic scope" value="Bacteria"/>
</dbReference>
<dbReference type="HOGENOM" id="CLU_164837_2_1_6"/>
<dbReference type="Proteomes" id="UP000001740">
    <property type="component" value="Chromosome"/>
</dbReference>
<dbReference type="GO" id="GO:0005829">
    <property type="term" value="C:cytosol"/>
    <property type="evidence" value="ECO:0007669"/>
    <property type="project" value="TreeGrafter"/>
</dbReference>
<dbReference type="GO" id="GO:0048027">
    <property type="term" value="F:mRNA 5'-UTR binding"/>
    <property type="evidence" value="ECO:0007669"/>
    <property type="project" value="UniProtKB-UniRule"/>
</dbReference>
<dbReference type="GO" id="GO:0006402">
    <property type="term" value="P:mRNA catabolic process"/>
    <property type="evidence" value="ECO:0007669"/>
    <property type="project" value="InterPro"/>
</dbReference>
<dbReference type="GO" id="GO:0045947">
    <property type="term" value="P:negative regulation of translational initiation"/>
    <property type="evidence" value="ECO:0007669"/>
    <property type="project" value="UniProtKB-UniRule"/>
</dbReference>
<dbReference type="GO" id="GO:0045948">
    <property type="term" value="P:positive regulation of translational initiation"/>
    <property type="evidence" value="ECO:0007669"/>
    <property type="project" value="UniProtKB-UniRule"/>
</dbReference>
<dbReference type="GO" id="GO:0006109">
    <property type="term" value="P:regulation of carbohydrate metabolic process"/>
    <property type="evidence" value="ECO:0007669"/>
    <property type="project" value="UniProtKB-UniRule"/>
</dbReference>
<dbReference type="FunFam" id="2.60.40.4380:FF:000001">
    <property type="entry name" value="Translational regulator CsrA"/>
    <property type="match status" value="1"/>
</dbReference>
<dbReference type="Gene3D" id="2.60.40.4380">
    <property type="entry name" value="Translational regulator CsrA"/>
    <property type="match status" value="1"/>
</dbReference>
<dbReference type="HAMAP" id="MF_00167">
    <property type="entry name" value="CsrA"/>
    <property type="match status" value="1"/>
</dbReference>
<dbReference type="InterPro" id="IPR003751">
    <property type="entry name" value="CsrA"/>
</dbReference>
<dbReference type="InterPro" id="IPR036107">
    <property type="entry name" value="CsrA_sf"/>
</dbReference>
<dbReference type="NCBIfam" id="TIGR00202">
    <property type="entry name" value="csrA"/>
    <property type="match status" value="1"/>
</dbReference>
<dbReference type="NCBIfam" id="NF002469">
    <property type="entry name" value="PRK01712.1"/>
    <property type="match status" value="1"/>
</dbReference>
<dbReference type="PANTHER" id="PTHR34984">
    <property type="entry name" value="CARBON STORAGE REGULATOR"/>
    <property type="match status" value="1"/>
</dbReference>
<dbReference type="PANTHER" id="PTHR34984:SF1">
    <property type="entry name" value="CARBON STORAGE REGULATOR"/>
    <property type="match status" value="1"/>
</dbReference>
<dbReference type="Pfam" id="PF02599">
    <property type="entry name" value="CsrA"/>
    <property type="match status" value="1"/>
</dbReference>
<dbReference type="SUPFAM" id="SSF117130">
    <property type="entry name" value="CsrA-like"/>
    <property type="match status" value="1"/>
</dbReference>
<gene>
    <name evidence="1" type="primary">csrA</name>
    <name type="ordered locus">PXO_00146</name>
</gene>
<protein>
    <recommendedName>
        <fullName evidence="1">Translational regulator CsrA</fullName>
    </recommendedName>
    <alternativeName>
        <fullName evidence="1">Carbon storage regulator</fullName>
    </alternativeName>
</protein>
<organism>
    <name type="scientific">Xanthomonas oryzae pv. oryzae (strain PXO99A)</name>
    <dbReference type="NCBI Taxonomy" id="360094"/>
    <lineage>
        <taxon>Bacteria</taxon>
        <taxon>Pseudomonadati</taxon>
        <taxon>Pseudomonadota</taxon>
        <taxon>Gammaproteobacteria</taxon>
        <taxon>Lysobacterales</taxon>
        <taxon>Lysobacteraceae</taxon>
        <taxon>Xanthomonas</taxon>
    </lineage>
</organism>
<comment type="function">
    <text evidence="1">A key translational regulator that binds mRNA to regulate translation initiation and/or mRNA stability. Mediates global changes in gene expression, shifting from rapid growth to stress survival by linking envelope stress, the stringent response and the catabolite repression systems. Usually binds in the 5'-UTR; binding at or near the Shine-Dalgarno sequence prevents ribosome-binding, repressing translation, binding elsewhere in the 5'-UTR can activate translation and/or stabilize the mRNA. Its function is antagonized by small RNA(s).</text>
</comment>
<comment type="subunit">
    <text evidence="1">Homodimer; the beta-strands of each monomer intercalate to form a hydrophobic core, while the alpha-helices form wings that extend away from the core.</text>
</comment>
<comment type="subcellular location">
    <subcellularLocation>
        <location evidence="1">Cytoplasm</location>
    </subcellularLocation>
</comment>
<comment type="similarity">
    <text evidence="1">Belongs to the CsrA/RsmA family.</text>
</comment>
<reference key="1">
    <citation type="journal article" date="2008" name="BMC Genomics">
        <title>Genome sequence and rapid evolution of the rice pathogen Xanthomonas oryzae pv. oryzae PXO99A.</title>
        <authorList>
            <person name="Salzberg S.L."/>
            <person name="Sommer D.D."/>
            <person name="Schatz M.C."/>
            <person name="Phillippy A.M."/>
            <person name="Rabinowicz P.D."/>
            <person name="Tsuge S."/>
            <person name="Furutani A."/>
            <person name="Ochiai H."/>
            <person name="Delcher A.L."/>
            <person name="Kelley D."/>
            <person name="Madupu R."/>
            <person name="Puiu D."/>
            <person name="Radune D."/>
            <person name="Shumway M."/>
            <person name="Trapnell C."/>
            <person name="Aparna G."/>
            <person name="Jha G."/>
            <person name="Pandey A."/>
            <person name="Patil P.B."/>
            <person name="Ishihara H."/>
            <person name="Meyer D.F."/>
            <person name="Szurek B."/>
            <person name="Verdier V."/>
            <person name="Koebnik R."/>
            <person name="Dow J.M."/>
            <person name="Ryan R.P."/>
            <person name="Hirata H."/>
            <person name="Tsuyumu S."/>
            <person name="Won Lee S."/>
            <person name="Seo Y.-S."/>
            <person name="Sriariyanum M."/>
            <person name="Ronald P.C."/>
            <person name="Sonti R.V."/>
            <person name="Van Sluys M.-A."/>
            <person name="Leach J.E."/>
            <person name="White F.F."/>
            <person name="Bogdanove A.J."/>
        </authorList>
    </citation>
    <scope>NUCLEOTIDE SEQUENCE [LARGE SCALE GENOMIC DNA]</scope>
    <source>
        <strain>PXO99A</strain>
    </source>
</reference>
<proteinExistence type="inferred from homology"/>
<feature type="chain" id="PRO_1000097517" description="Translational regulator CsrA">
    <location>
        <begin position="1"/>
        <end position="70"/>
    </location>
</feature>
<feature type="region of interest" description="Disordered" evidence="2">
    <location>
        <begin position="51"/>
        <end position="70"/>
    </location>
</feature>